<reference key="1">
    <citation type="journal article" date="2000" name="Nature">
        <title>Complete genome sequence of Pseudomonas aeruginosa PAO1, an opportunistic pathogen.</title>
        <authorList>
            <person name="Stover C.K."/>
            <person name="Pham X.-Q.T."/>
            <person name="Erwin A.L."/>
            <person name="Mizoguchi S.D."/>
            <person name="Warrener P."/>
            <person name="Hickey M.J."/>
            <person name="Brinkman F.S.L."/>
            <person name="Hufnagle W.O."/>
            <person name="Kowalik D.J."/>
            <person name="Lagrou M."/>
            <person name="Garber R.L."/>
            <person name="Goltry L."/>
            <person name="Tolentino E."/>
            <person name="Westbrock-Wadman S."/>
            <person name="Yuan Y."/>
            <person name="Brody L.L."/>
            <person name="Coulter S.N."/>
            <person name="Folger K.R."/>
            <person name="Kas A."/>
            <person name="Larbig K."/>
            <person name="Lim R.M."/>
            <person name="Smith K.A."/>
            <person name="Spencer D.H."/>
            <person name="Wong G.K.-S."/>
            <person name="Wu Z."/>
            <person name="Paulsen I.T."/>
            <person name="Reizer J."/>
            <person name="Saier M.H. Jr."/>
            <person name="Hancock R.E.W."/>
            <person name="Lory S."/>
            <person name="Olson M.V."/>
        </authorList>
    </citation>
    <scope>NUCLEOTIDE SEQUENCE [LARGE SCALE GENOMIC DNA]</scope>
    <source>
        <strain>ATCC 15692 / DSM 22644 / CIP 104116 / JCM 14847 / LMG 12228 / 1C / PRS 101 / PAO1</strain>
    </source>
</reference>
<accession>Q9HXZ3</accession>
<comment type="function">
    <text evidence="1">Ligates lysine onto the cytidine present at position 34 of the AUA codon-specific tRNA(Ile) that contains the anticodon CAU, in an ATP-dependent manner. Cytidine is converted to lysidine, thus changing the amino acid specificity of the tRNA from methionine to isoleucine.</text>
</comment>
<comment type="catalytic activity">
    <reaction evidence="1">
        <text>cytidine(34) in tRNA(Ile2) + L-lysine + ATP = lysidine(34) in tRNA(Ile2) + AMP + diphosphate + H(+)</text>
        <dbReference type="Rhea" id="RHEA:43744"/>
        <dbReference type="Rhea" id="RHEA-COMP:10625"/>
        <dbReference type="Rhea" id="RHEA-COMP:10670"/>
        <dbReference type="ChEBI" id="CHEBI:15378"/>
        <dbReference type="ChEBI" id="CHEBI:30616"/>
        <dbReference type="ChEBI" id="CHEBI:32551"/>
        <dbReference type="ChEBI" id="CHEBI:33019"/>
        <dbReference type="ChEBI" id="CHEBI:82748"/>
        <dbReference type="ChEBI" id="CHEBI:83665"/>
        <dbReference type="ChEBI" id="CHEBI:456215"/>
        <dbReference type="EC" id="6.3.4.19"/>
    </reaction>
</comment>
<comment type="subcellular location">
    <subcellularLocation>
        <location evidence="1">Cytoplasm</location>
    </subcellularLocation>
</comment>
<comment type="domain">
    <text>The N-terminal region contains the highly conserved SGGXDS motif, predicted to be a P-loop motif involved in ATP binding.</text>
</comment>
<comment type="similarity">
    <text evidence="1">Belongs to the tRNA(Ile)-lysidine synthase family.</text>
</comment>
<gene>
    <name evidence="1" type="primary">tilS</name>
    <name type="ordered locus">PA3638</name>
</gene>
<sequence>MPAVPLESRLLQALAPWREAGGWCVAFSGGLDSTVLLHLLAQLARSEALPALSALHVHHGLQAAADGWPAHCQAVCRSLGIPLRVERVQVAVGGSIEQAARDARYRAFQANLGEGQVLLTAQHLDDQAETLLFRLLRGAGLRGLAAMPASRPLGGGRLCRPLLGVSRAELEAYAQAHRLDWVEDPSNQDPRFSRNYLRREIMPRLASHWPQAVAGMARCAAHLREAEDLLAELAAIDLRACRQPSELDWPDWLDLPRIALEPLRRLSAARQRNLLRAWLGQLTRLPDSDHWAGWESLRDAGDDADPIWRLESGELRRGAGRIWWLPADWRAAAGPFVWERPAHPLLLPGNGRLALLGEVPAGPLRVDYRRGGEVLALAGRGRRDLKRLLNEAGVPSFLRGRLPLLFRADELLAVANIPGLDSPREGGWRLSWSPPTNDPGLS</sequence>
<feature type="chain" id="PRO_0000181748" description="tRNA(Ile)-lysidine synthase">
    <location>
        <begin position="1"/>
        <end position="442"/>
    </location>
</feature>
<feature type="binding site" evidence="1">
    <location>
        <begin position="28"/>
        <end position="33"/>
    </location>
    <ligand>
        <name>ATP</name>
        <dbReference type="ChEBI" id="CHEBI:30616"/>
    </ligand>
</feature>
<keyword id="KW-0067">ATP-binding</keyword>
<keyword id="KW-0963">Cytoplasm</keyword>
<keyword id="KW-0436">Ligase</keyword>
<keyword id="KW-0547">Nucleotide-binding</keyword>
<keyword id="KW-1185">Reference proteome</keyword>
<keyword id="KW-0819">tRNA processing</keyword>
<name>TILS_PSEAE</name>
<proteinExistence type="inferred from homology"/>
<evidence type="ECO:0000255" key="1">
    <source>
        <dbReference type="HAMAP-Rule" id="MF_01161"/>
    </source>
</evidence>
<protein>
    <recommendedName>
        <fullName evidence="1">tRNA(Ile)-lysidine synthase</fullName>
        <ecNumber evidence="1">6.3.4.19</ecNumber>
    </recommendedName>
    <alternativeName>
        <fullName evidence="1">tRNA(Ile)-2-lysyl-cytidine synthase</fullName>
    </alternativeName>
    <alternativeName>
        <fullName evidence="1">tRNA(Ile)-lysidine synthetase</fullName>
    </alternativeName>
</protein>
<dbReference type="EC" id="6.3.4.19" evidence="1"/>
<dbReference type="EMBL" id="AE004091">
    <property type="protein sequence ID" value="AAG07026.1"/>
    <property type="molecule type" value="Genomic_DNA"/>
</dbReference>
<dbReference type="PIR" id="C83192">
    <property type="entry name" value="C83192"/>
</dbReference>
<dbReference type="RefSeq" id="NP_252328.1">
    <property type="nucleotide sequence ID" value="NC_002516.2"/>
</dbReference>
<dbReference type="RefSeq" id="WP_003113867.1">
    <property type="nucleotide sequence ID" value="NC_002516.2"/>
</dbReference>
<dbReference type="SMR" id="Q9HXZ3"/>
<dbReference type="FunCoup" id="Q9HXZ3">
    <property type="interactions" value="369"/>
</dbReference>
<dbReference type="STRING" id="208964.PA3638"/>
<dbReference type="PaxDb" id="208964-PA3638"/>
<dbReference type="GeneID" id="880547"/>
<dbReference type="KEGG" id="pae:PA3638"/>
<dbReference type="PATRIC" id="fig|208964.12.peg.3807"/>
<dbReference type="PseudoCAP" id="PA3638"/>
<dbReference type="HOGENOM" id="CLU_018869_2_0_6"/>
<dbReference type="InParanoid" id="Q9HXZ3"/>
<dbReference type="OrthoDB" id="9807403at2"/>
<dbReference type="PhylomeDB" id="Q9HXZ3"/>
<dbReference type="BioCyc" id="PAER208964:G1FZ6-3708-MONOMER"/>
<dbReference type="Proteomes" id="UP000002438">
    <property type="component" value="Chromosome"/>
</dbReference>
<dbReference type="GO" id="GO:0005737">
    <property type="term" value="C:cytoplasm"/>
    <property type="evidence" value="ECO:0007669"/>
    <property type="project" value="UniProtKB-SubCell"/>
</dbReference>
<dbReference type="GO" id="GO:0005524">
    <property type="term" value="F:ATP binding"/>
    <property type="evidence" value="ECO:0007669"/>
    <property type="project" value="UniProtKB-UniRule"/>
</dbReference>
<dbReference type="GO" id="GO:0032267">
    <property type="term" value="F:tRNA(Ile)-lysidine synthase activity"/>
    <property type="evidence" value="ECO:0007669"/>
    <property type="project" value="UniProtKB-EC"/>
</dbReference>
<dbReference type="GO" id="GO:0006400">
    <property type="term" value="P:tRNA modification"/>
    <property type="evidence" value="ECO:0007669"/>
    <property type="project" value="UniProtKB-UniRule"/>
</dbReference>
<dbReference type="CDD" id="cd01992">
    <property type="entry name" value="TilS_N"/>
    <property type="match status" value="1"/>
</dbReference>
<dbReference type="Gene3D" id="1.20.59.20">
    <property type="match status" value="1"/>
</dbReference>
<dbReference type="Gene3D" id="3.40.50.620">
    <property type="entry name" value="HUPs"/>
    <property type="match status" value="1"/>
</dbReference>
<dbReference type="HAMAP" id="MF_01161">
    <property type="entry name" value="tRNA_Ile_lys_synt"/>
    <property type="match status" value="1"/>
</dbReference>
<dbReference type="InterPro" id="IPR012796">
    <property type="entry name" value="Lysidine-tRNA-synth_C"/>
</dbReference>
<dbReference type="InterPro" id="IPR014729">
    <property type="entry name" value="Rossmann-like_a/b/a_fold"/>
</dbReference>
<dbReference type="InterPro" id="IPR011063">
    <property type="entry name" value="TilS/TtcA_N"/>
</dbReference>
<dbReference type="InterPro" id="IPR012094">
    <property type="entry name" value="tRNA_Ile_lys_synt"/>
</dbReference>
<dbReference type="InterPro" id="IPR012795">
    <property type="entry name" value="tRNA_Ile_lys_synt_N"/>
</dbReference>
<dbReference type="InterPro" id="IPR015262">
    <property type="entry name" value="tRNA_Ile_lys_synt_subst-bd"/>
</dbReference>
<dbReference type="NCBIfam" id="TIGR02433">
    <property type="entry name" value="lysidine_TilS_C"/>
    <property type="match status" value="1"/>
</dbReference>
<dbReference type="NCBIfam" id="TIGR02432">
    <property type="entry name" value="lysidine_TilS_N"/>
    <property type="match status" value="1"/>
</dbReference>
<dbReference type="PANTHER" id="PTHR43033">
    <property type="entry name" value="TRNA(ILE)-LYSIDINE SYNTHASE-RELATED"/>
    <property type="match status" value="1"/>
</dbReference>
<dbReference type="PANTHER" id="PTHR43033:SF1">
    <property type="entry name" value="TRNA(ILE)-LYSIDINE SYNTHASE-RELATED"/>
    <property type="match status" value="1"/>
</dbReference>
<dbReference type="Pfam" id="PF01171">
    <property type="entry name" value="ATP_bind_3"/>
    <property type="match status" value="1"/>
</dbReference>
<dbReference type="Pfam" id="PF09179">
    <property type="entry name" value="TilS"/>
    <property type="match status" value="1"/>
</dbReference>
<dbReference type="Pfam" id="PF11734">
    <property type="entry name" value="TilS_C"/>
    <property type="match status" value="1"/>
</dbReference>
<dbReference type="SMART" id="SM00977">
    <property type="entry name" value="TilS_C"/>
    <property type="match status" value="1"/>
</dbReference>
<dbReference type="SUPFAM" id="SSF52402">
    <property type="entry name" value="Adenine nucleotide alpha hydrolases-like"/>
    <property type="match status" value="1"/>
</dbReference>
<dbReference type="SUPFAM" id="SSF82829">
    <property type="entry name" value="MesJ substrate recognition domain-like"/>
    <property type="match status" value="1"/>
</dbReference>
<dbReference type="SUPFAM" id="SSF56037">
    <property type="entry name" value="PheT/TilS domain"/>
    <property type="match status" value="1"/>
</dbReference>
<organism>
    <name type="scientific">Pseudomonas aeruginosa (strain ATCC 15692 / DSM 22644 / CIP 104116 / JCM 14847 / LMG 12228 / 1C / PRS 101 / PAO1)</name>
    <dbReference type="NCBI Taxonomy" id="208964"/>
    <lineage>
        <taxon>Bacteria</taxon>
        <taxon>Pseudomonadati</taxon>
        <taxon>Pseudomonadota</taxon>
        <taxon>Gammaproteobacteria</taxon>
        <taxon>Pseudomonadales</taxon>
        <taxon>Pseudomonadaceae</taxon>
        <taxon>Pseudomonas</taxon>
    </lineage>
</organism>